<protein>
    <recommendedName>
        <fullName>Probable periplasmic serine protease do/HhoA-like</fullName>
        <ecNumber>3.4.21.-</ecNumber>
    </recommendedName>
</protein>
<comment type="subcellular location">
    <subcellularLocation>
        <location evidence="3">Periplasm</location>
    </subcellularLocation>
</comment>
<comment type="similarity">
    <text evidence="3">Belongs to the peptidase S1C family.</text>
</comment>
<proteinExistence type="inferred from homology"/>
<name>HTOA_HAEIN</name>
<dbReference type="EC" id="3.4.21.-"/>
<dbReference type="EMBL" id="L42023">
    <property type="protein sequence ID" value="AAC22906.1"/>
    <property type="molecule type" value="Genomic_DNA"/>
</dbReference>
<dbReference type="PIR" id="A64113">
    <property type="entry name" value="A64113"/>
</dbReference>
<dbReference type="RefSeq" id="NP_439414.1">
    <property type="nucleotide sequence ID" value="NC_000907.1"/>
</dbReference>
<dbReference type="SMR" id="P45129"/>
<dbReference type="STRING" id="71421.HI_1259"/>
<dbReference type="EnsemblBacteria" id="AAC22906">
    <property type="protein sequence ID" value="AAC22906"/>
    <property type="gene ID" value="HI_1259"/>
</dbReference>
<dbReference type="KEGG" id="hin:HI_1259"/>
<dbReference type="PATRIC" id="fig|71421.8.peg.1311"/>
<dbReference type="eggNOG" id="COG0265">
    <property type="taxonomic scope" value="Bacteria"/>
</dbReference>
<dbReference type="HOGENOM" id="CLU_020120_1_1_6"/>
<dbReference type="OrthoDB" id="9758917at2"/>
<dbReference type="PhylomeDB" id="P45129"/>
<dbReference type="BioCyc" id="HINF71421:G1GJ1-1287-MONOMER"/>
<dbReference type="Proteomes" id="UP000000579">
    <property type="component" value="Chromosome"/>
</dbReference>
<dbReference type="GO" id="GO:0042597">
    <property type="term" value="C:periplasmic space"/>
    <property type="evidence" value="ECO:0000318"/>
    <property type="project" value="GO_Central"/>
</dbReference>
<dbReference type="GO" id="GO:0004252">
    <property type="term" value="F:serine-type endopeptidase activity"/>
    <property type="evidence" value="ECO:0007669"/>
    <property type="project" value="InterPro"/>
</dbReference>
<dbReference type="GO" id="GO:0006515">
    <property type="term" value="P:protein quality control for misfolded or incompletely synthesized proteins"/>
    <property type="evidence" value="ECO:0000318"/>
    <property type="project" value="GO_Central"/>
</dbReference>
<dbReference type="CDD" id="cd10839">
    <property type="entry name" value="cpPDZ1_DegP-like"/>
    <property type="match status" value="1"/>
</dbReference>
<dbReference type="CDD" id="cd23084">
    <property type="entry name" value="cpPDZ2_DegP-like"/>
    <property type="match status" value="1"/>
</dbReference>
<dbReference type="FunFam" id="2.30.42.10:FF:000037">
    <property type="entry name" value="Periplasmic serine endoprotease DegP-like"/>
    <property type="match status" value="1"/>
</dbReference>
<dbReference type="FunFam" id="2.40.10.120:FF:000001">
    <property type="entry name" value="Periplasmic serine endoprotease DegP-like"/>
    <property type="match status" value="1"/>
</dbReference>
<dbReference type="FunFam" id="2.40.10.10:FF:000001">
    <property type="entry name" value="Periplasmic serine protease DegS"/>
    <property type="match status" value="1"/>
</dbReference>
<dbReference type="Gene3D" id="2.30.42.10">
    <property type="match status" value="2"/>
</dbReference>
<dbReference type="Gene3D" id="2.40.10.120">
    <property type="match status" value="1"/>
</dbReference>
<dbReference type="InterPro" id="IPR001478">
    <property type="entry name" value="PDZ"/>
</dbReference>
<dbReference type="InterPro" id="IPR036034">
    <property type="entry name" value="PDZ_sf"/>
</dbReference>
<dbReference type="InterPro" id="IPR011782">
    <property type="entry name" value="Pept_S1C_Do"/>
</dbReference>
<dbReference type="InterPro" id="IPR009003">
    <property type="entry name" value="Peptidase_S1_PA"/>
</dbReference>
<dbReference type="InterPro" id="IPR001940">
    <property type="entry name" value="Peptidase_S1C"/>
</dbReference>
<dbReference type="NCBIfam" id="TIGR02037">
    <property type="entry name" value="degP_htrA_DO"/>
    <property type="match status" value="1"/>
</dbReference>
<dbReference type="PANTHER" id="PTHR22939">
    <property type="entry name" value="SERINE PROTEASE FAMILY S1C HTRA-RELATED"/>
    <property type="match status" value="1"/>
</dbReference>
<dbReference type="PANTHER" id="PTHR22939:SF129">
    <property type="entry name" value="SERINE PROTEASE HTRA2, MITOCHONDRIAL"/>
    <property type="match status" value="1"/>
</dbReference>
<dbReference type="Pfam" id="PF00595">
    <property type="entry name" value="PDZ"/>
    <property type="match status" value="2"/>
</dbReference>
<dbReference type="Pfam" id="PF13365">
    <property type="entry name" value="Trypsin_2"/>
    <property type="match status" value="1"/>
</dbReference>
<dbReference type="PRINTS" id="PR00834">
    <property type="entry name" value="PROTEASES2C"/>
</dbReference>
<dbReference type="SMART" id="SM00228">
    <property type="entry name" value="PDZ"/>
    <property type="match status" value="2"/>
</dbReference>
<dbReference type="SUPFAM" id="SSF50156">
    <property type="entry name" value="PDZ domain-like"/>
    <property type="match status" value="2"/>
</dbReference>
<dbReference type="SUPFAM" id="SSF50494">
    <property type="entry name" value="Trypsin-like serine proteases"/>
    <property type="match status" value="1"/>
</dbReference>
<dbReference type="PROSITE" id="PS50106">
    <property type="entry name" value="PDZ"/>
    <property type="match status" value="2"/>
</dbReference>
<organism>
    <name type="scientific">Haemophilus influenzae (strain ATCC 51907 / DSM 11121 / KW20 / Rd)</name>
    <dbReference type="NCBI Taxonomy" id="71421"/>
    <lineage>
        <taxon>Bacteria</taxon>
        <taxon>Pseudomonadati</taxon>
        <taxon>Pseudomonadota</taxon>
        <taxon>Gammaproteobacteria</taxon>
        <taxon>Pasteurellales</taxon>
        <taxon>Pasteurellaceae</taxon>
        <taxon>Haemophilus</taxon>
    </lineage>
</organism>
<keyword id="KW-0378">Hydrolase</keyword>
<keyword id="KW-0574">Periplasm</keyword>
<keyword id="KW-0645">Protease</keyword>
<keyword id="KW-1185">Reference proteome</keyword>
<keyword id="KW-0677">Repeat</keyword>
<keyword id="KW-0720">Serine protease</keyword>
<keyword id="KW-0732">Signal</keyword>
<gene>
    <name type="ordered locus">HI_1259</name>
</gene>
<feature type="signal peptide" evidence="1">
    <location>
        <begin position="1"/>
        <end position="29"/>
    </location>
</feature>
<feature type="chain" id="PRO_0000026936" description="Probable periplasmic serine protease do/HhoA-like">
    <location>
        <begin position="30"/>
        <end position="466"/>
    </location>
</feature>
<feature type="domain" description="PDZ 1" evidence="2">
    <location>
        <begin position="270"/>
        <end position="361"/>
    </location>
</feature>
<feature type="domain" description="PDZ 2" evidence="2">
    <location>
        <begin position="367"/>
        <end position="458"/>
    </location>
</feature>
<feature type="active site" description="Charge relay system" evidence="1">
    <location>
        <position position="120"/>
    </location>
</feature>
<feature type="active site" description="Charge relay system" evidence="1">
    <location>
        <position position="150"/>
    </location>
</feature>
<feature type="active site" description="Charge relay system" evidence="1">
    <location>
        <position position="226"/>
    </location>
</feature>
<reference key="1">
    <citation type="journal article" date="1995" name="Science">
        <title>Whole-genome random sequencing and assembly of Haemophilus influenzae Rd.</title>
        <authorList>
            <person name="Fleischmann R.D."/>
            <person name="Adams M.D."/>
            <person name="White O."/>
            <person name="Clayton R.A."/>
            <person name="Kirkness E.F."/>
            <person name="Kerlavage A.R."/>
            <person name="Bult C.J."/>
            <person name="Tomb J.-F."/>
            <person name="Dougherty B.A."/>
            <person name="Merrick J.M."/>
            <person name="McKenney K."/>
            <person name="Sutton G.G."/>
            <person name="FitzHugh W."/>
            <person name="Fields C.A."/>
            <person name="Gocayne J.D."/>
            <person name="Scott J.D."/>
            <person name="Shirley R."/>
            <person name="Liu L.-I."/>
            <person name="Glodek A."/>
            <person name="Kelley J.M."/>
            <person name="Weidman J.F."/>
            <person name="Phillips C.A."/>
            <person name="Spriggs T."/>
            <person name="Hedblom E."/>
            <person name="Cotton M.D."/>
            <person name="Utterback T.R."/>
            <person name="Hanna M.C."/>
            <person name="Nguyen D.T."/>
            <person name="Saudek D.M."/>
            <person name="Brandon R.C."/>
            <person name="Fine L.D."/>
            <person name="Fritchman J.L."/>
            <person name="Fuhrmann J.L."/>
            <person name="Geoghagen N.S.M."/>
            <person name="Gnehm C.L."/>
            <person name="McDonald L.A."/>
            <person name="Small K.V."/>
            <person name="Fraser C.M."/>
            <person name="Smith H.O."/>
            <person name="Venter J.C."/>
        </authorList>
    </citation>
    <scope>NUCLEOTIDE SEQUENCE [LARGE SCALE GENOMIC DNA]</scope>
    <source>
        <strain>ATCC 51907 / DSM 11121 / KW20 / Rd</strain>
    </source>
</reference>
<accession>P45129</accession>
<sequence>MKKTRFVLNSIALGLSVLSTSFVAHVAQATLPSFVSEQNSLAPMLEKVQPAVVTLSVEGKAKVDSRSPFLDDIPEEFKFFFGDRFAEQFGGRGESKRNFRGLGSGVIINASKGYVLTNNHVIDGADKITVQLQDGREFKAKLVGKDEQSDIALVQLEKPSNLTEIKFADSDKLRVGDFTVAIGNPFGLGQTVTSGIVSALGRSTGSDSGTYENYIQTDAAVNRGNSGGALVNLNGELIGINTAIISPSGGNAGIAFAIPSNQASNLVQQILEFGQVRRGLLGIKGGELNADLAKAFNVSAQQGAFVSEVLPKSAAEKAGLKAGDIITAMNGQKISSFAEIRAKIATTGAGKEISLTYLRDGKSHDVKMKLQADDSSQLSSKTELPALDGATLKDYDAKGVKGIEITKIQPNSLAAQRGLKSGDIIIGINRQMIENIRELNKVLETEPSAVALNILRGDSNFYLLVQ</sequence>
<evidence type="ECO:0000255" key="1"/>
<evidence type="ECO:0000255" key="2">
    <source>
        <dbReference type="PROSITE-ProRule" id="PRU00143"/>
    </source>
</evidence>
<evidence type="ECO:0000305" key="3"/>